<organism>
    <name type="scientific">Buchnera aphidicola subsp. Acyrthosiphon pisum (strain APS)</name>
    <name type="common">Acyrthosiphon pisum symbiotic bacterium</name>
    <dbReference type="NCBI Taxonomy" id="107806"/>
    <lineage>
        <taxon>Bacteria</taxon>
        <taxon>Pseudomonadati</taxon>
        <taxon>Pseudomonadota</taxon>
        <taxon>Gammaproteobacteria</taxon>
        <taxon>Enterobacterales</taxon>
        <taxon>Erwiniaceae</taxon>
        <taxon>Buchnera</taxon>
    </lineage>
</organism>
<dbReference type="EC" id="4.2.3.5" evidence="2"/>
<dbReference type="EMBL" id="BA000003">
    <property type="protein sequence ID" value="BAB12816.1"/>
    <property type="molecule type" value="Genomic_DNA"/>
</dbReference>
<dbReference type="RefSeq" id="NP_239930.1">
    <property type="nucleotide sequence ID" value="NC_002528.1"/>
</dbReference>
<dbReference type="RefSeq" id="WP_009874051.1">
    <property type="nucleotide sequence ID" value="NC_002528.1"/>
</dbReference>
<dbReference type="SMR" id="P57198"/>
<dbReference type="STRING" id="563178.BUAP5A_095"/>
<dbReference type="EnsemblBacteria" id="BAB12816">
    <property type="protein sequence ID" value="BAB12816"/>
    <property type="gene ID" value="BAB12816"/>
</dbReference>
<dbReference type="KEGG" id="buc:BU097"/>
<dbReference type="PATRIC" id="fig|107806.10.peg.105"/>
<dbReference type="eggNOG" id="COG0082">
    <property type="taxonomic scope" value="Bacteria"/>
</dbReference>
<dbReference type="HOGENOM" id="CLU_034547_0_2_6"/>
<dbReference type="UniPathway" id="UPA00053">
    <property type="reaction ID" value="UER00090"/>
</dbReference>
<dbReference type="Proteomes" id="UP000001806">
    <property type="component" value="Chromosome"/>
</dbReference>
<dbReference type="GO" id="GO:0005829">
    <property type="term" value="C:cytosol"/>
    <property type="evidence" value="ECO:0007669"/>
    <property type="project" value="TreeGrafter"/>
</dbReference>
<dbReference type="GO" id="GO:0004107">
    <property type="term" value="F:chorismate synthase activity"/>
    <property type="evidence" value="ECO:0007669"/>
    <property type="project" value="UniProtKB-UniRule"/>
</dbReference>
<dbReference type="GO" id="GO:0010181">
    <property type="term" value="F:FMN binding"/>
    <property type="evidence" value="ECO:0007669"/>
    <property type="project" value="TreeGrafter"/>
</dbReference>
<dbReference type="GO" id="GO:0008652">
    <property type="term" value="P:amino acid biosynthetic process"/>
    <property type="evidence" value="ECO:0007669"/>
    <property type="project" value="UniProtKB-KW"/>
</dbReference>
<dbReference type="GO" id="GO:0009073">
    <property type="term" value="P:aromatic amino acid family biosynthetic process"/>
    <property type="evidence" value="ECO:0007669"/>
    <property type="project" value="UniProtKB-KW"/>
</dbReference>
<dbReference type="GO" id="GO:0009423">
    <property type="term" value="P:chorismate biosynthetic process"/>
    <property type="evidence" value="ECO:0007669"/>
    <property type="project" value="UniProtKB-UniRule"/>
</dbReference>
<dbReference type="CDD" id="cd07304">
    <property type="entry name" value="Chorismate_synthase"/>
    <property type="match status" value="1"/>
</dbReference>
<dbReference type="FunFam" id="3.60.150.10:FF:000001">
    <property type="entry name" value="Chorismate synthase"/>
    <property type="match status" value="1"/>
</dbReference>
<dbReference type="Gene3D" id="3.60.150.10">
    <property type="entry name" value="Chorismate synthase AroC"/>
    <property type="match status" value="1"/>
</dbReference>
<dbReference type="HAMAP" id="MF_00300">
    <property type="entry name" value="Chorismate_synth"/>
    <property type="match status" value="1"/>
</dbReference>
<dbReference type="InterPro" id="IPR000453">
    <property type="entry name" value="Chorismate_synth"/>
</dbReference>
<dbReference type="InterPro" id="IPR035904">
    <property type="entry name" value="Chorismate_synth_AroC_sf"/>
</dbReference>
<dbReference type="InterPro" id="IPR020541">
    <property type="entry name" value="Chorismate_synthase_CS"/>
</dbReference>
<dbReference type="NCBIfam" id="TIGR00033">
    <property type="entry name" value="aroC"/>
    <property type="match status" value="1"/>
</dbReference>
<dbReference type="NCBIfam" id="NF003793">
    <property type="entry name" value="PRK05382.1"/>
    <property type="match status" value="1"/>
</dbReference>
<dbReference type="PANTHER" id="PTHR21085">
    <property type="entry name" value="CHORISMATE SYNTHASE"/>
    <property type="match status" value="1"/>
</dbReference>
<dbReference type="PANTHER" id="PTHR21085:SF0">
    <property type="entry name" value="CHORISMATE SYNTHASE"/>
    <property type="match status" value="1"/>
</dbReference>
<dbReference type="Pfam" id="PF01264">
    <property type="entry name" value="Chorismate_synt"/>
    <property type="match status" value="1"/>
</dbReference>
<dbReference type="PIRSF" id="PIRSF001456">
    <property type="entry name" value="Chorismate_synth"/>
    <property type="match status" value="1"/>
</dbReference>
<dbReference type="SUPFAM" id="SSF103263">
    <property type="entry name" value="Chorismate synthase, AroC"/>
    <property type="match status" value="1"/>
</dbReference>
<dbReference type="PROSITE" id="PS00787">
    <property type="entry name" value="CHORISMATE_SYNTHASE_1"/>
    <property type="match status" value="1"/>
</dbReference>
<dbReference type="PROSITE" id="PS00788">
    <property type="entry name" value="CHORISMATE_SYNTHASE_2"/>
    <property type="match status" value="1"/>
</dbReference>
<dbReference type="PROSITE" id="PS00789">
    <property type="entry name" value="CHORISMATE_SYNTHASE_3"/>
    <property type="match status" value="1"/>
</dbReference>
<comment type="function">
    <text evidence="2">Catalyzes the anti-1,4-elimination of the C-3 phosphate and the C-6 proR hydrogen from 5-enolpyruvylshikimate-3-phosphate (EPSP) to yield chorismate, which is the branch point compound that serves as the starting substrate for the three terminal pathways of aromatic amino acid biosynthesis. This reaction introduces a second double bond into the aromatic ring system.</text>
</comment>
<comment type="catalytic activity">
    <reaction evidence="2">
        <text>5-O-(1-carboxyvinyl)-3-phosphoshikimate = chorismate + phosphate</text>
        <dbReference type="Rhea" id="RHEA:21020"/>
        <dbReference type="ChEBI" id="CHEBI:29748"/>
        <dbReference type="ChEBI" id="CHEBI:43474"/>
        <dbReference type="ChEBI" id="CHEBI:57701"/>
        <dbReference type="EC" id="4.2.3.5"/>
    </reaction>
</comment>
<comment type="cofactor">
    <cofactor evidence="2">
        <name>FMNH2</name>
        <dbReference type="ChEBI" id="CHEBI:57618"/>
    </cofactor>
    <text evidence="2">Reduced FMN (FMNH(2)).</text>
</comment>
<comment type="pathway">
    <text evidence="2">Metabolic intermediate biosynthesis; chorismate biosynthesis; chorismate from D-erythrose 4-phosphate and phosphoenolpyruvate: step 7/7.</text>
</comment>
<comment type="subunit">
    <text evidence="1 2">Homotetramer.</text>
</comment>
<comment type="similarity">
    <text evidence="2 3">Belongs to the chorismate synthase family.</text>
</comment>
<feature type="chain" id="PRO_0000140563" description="Chorismate synthase">
    <location>
        <begin position="1"/>
        <end position="354"/>
    </location>
</feature>
<feature type="binding site" evidence="2">
    <location>
        <position position="48"/>
    </location>
    <ligand>
        <name>NADP(+)</name>
        <dbReference type="ChEBI" id="CHEBI:58349"/>
    </ligand>
</feature>
<feature type="binding site" evidence="2">
    <location>
        <position position="54"/>
    </location>
    <ligand>
        <name>NADP(+)</name>
        <dbReference type="ChEBI" id="CHEBI:58349"/>
    </ligand>
</feature>
<feature type="binding site" evidence="2">
    <location>
        <begin position="125"/>
        <end position="127"/>
    </location>
    <ligand>
        <name>FMN</name>
        <dbReference type="ChEBI" id="CHEBI:58210"/>
    </ligand>
</feature>
<feature type="binding site" evidence="2">
    <location>
        <begin position="238"/>
        <end position="239"/>
    </location>
    <ligand>
        <name>FMN</name>
        <dbReference type="ChEBI" id="CHEBI:58210"/>
    </ligand>
</feature>
<feature type="binding site" evidence="2">
    <location>
        <position position="278"/>
    </location>
    <ligand>
        <name>FMN</name>
        <dbReference type="ChEBI" id="CHEBI:58210"/>
    </ligand>
</feature>
<feature type="binding site" evidence="2">
    <location>
        <begin position="293"/>
        <end position="297"/>
    </location>
    <ligand>
        <name>FMN</name>
        <dbReference type="ChEBI" id="CHEBI:58210"/>
    </ligand>
</feature>
<feature type="binding site" evidence="2">
    <location>
        <position position="319"/>
    </location>
    <ligand>
        <name>FMN</name>
        <dbReference type="ChEBI" id="CHEBI:58210"/>
    </ligand>
</feature>
<proteinExistence type="inferred from homology"/>
<sequence>MSGNTIGKIFCVTTFGESHGEALGCIIDGTPPGLELSCKDLQYDLNRRRPGTSRYTTLRREPDEVNILSGIFNGVTTGTSIGLIIYNHDHRSQDYSDIKNLFRPGHADYTYEKKYGIRDYRGGGRSSARETAMRVAAGAIAKKYLNEKYGITIRAYLSAMGNIKCPFKSWQEVENNPFFCSDPEKILALENLIKYLKKIGDSIGAEITIIAENIPVGLGEPVFDRLDADLSHALMSINAAKGVEIGDGFSVINQRGSEHRDEITPQGFLTNHSGGILGGISNGREIVLKVAFKPTSSIRKAGNTINKNNEKVQIVTKGRHDPCVGLRAVPITEAMVAIVLMDHLLRFRAQCSGK</sequence>
<accession>P57198</accession>
<gene>
    <name evidence="2" type="primary">aroC</name>
    <name type="ordered locus">BU097</name>
</gene>
<evidence type="ECO:0000250" key="1"/>
<evidence type="ECO:0000255" key="2">
    <source>
        <dbReference type="HAMAP-Rule" id="MF_00300"/>
    </source>
</evidence>
<evidence type="ECO:0000305" key="3"/>
<keyword id="KW-0028">Amino-acid biosynthesis</keyword>
<keyword id="KW-0057">Aromatic amino acid biosynthesis</keyword>
<keyword id="KW-0274">FAD</keyword>
<keyword id="KW-0285">Flavoprotein</keyword>
<keyword id="KW-0288">FMN</keyword>
<keyword id="KW-0456">Lyase</keyword>
<keyword id="KW-0521">NADP</keyword>
<keyword id="KW-1185">Reference proteome</keyword>
<name>AROC_BUCAI</name>
<reference key="1">
    <citation type="journal article" date="2000" name="Nature">
        <title>Genome sequence of the endocellular bacterial symbiont of aphids Buchnera sp. APS.</title>
        <authorList>
            <person name="Shigenobu S."/>
            <person name="Watanabe H."/>
            <person name="Hattori M."/>
            <person name="Sakaki Y."/>
            <person name="Ishikawa H."/>
        </authorList>
    </citation>
    <scope>NUCLEOTIDE SEQUENCE [LARGE SCALE GENOMIC DNA]</scope>
    <source>
        <strain>APS</strain>
    </source>
</reference>
<protein>
    <recommendedName>
        <fullName evidence="2">Chorismate synthase</fullName>
        <shortName evidence="2">CS</shortName>
        <ecNumber evidence="2">4.2.3.5</ecNumber>
    </recommendedName>
    <alternativeName>
        <fullName evidence="2">5-enolpyruvylshikimate-3-phosphate phospholyase</fullName>
    </alternativeName>
</protein>